<reference key="1">
    <citation type="journal article" date="2010" name="Appl. Environ. Microbiol.">
        <title>Conserved symbiotic plasmid DNA sequences in the multireplicon pangenomic structure of Rhizobium etli.</title>
        <authorList>
            <person name="Gonzalez V."/>
            <person name="Acosta J.L."/>
            <person name="Santamaria R.I."/>
            <person name="Bustos P."/>
            <person name="Fernandez J.L."/>
            <person name="Hernandez Gonzalez I.L."/>
            <person name="Diaz R."/>
            <person name="Flores M."/>
            <person name="Palacios R."/>
            <person name="Mora J."/>
            <person name="Davila G."/>
        </authorList>
    </citation>
    <scope>NUCLEOTIDE SEQUENCE [LARGE SCALE GENOMIC DNA]</scope>
    <source>
        <strain>CIAT 652</strain>
    </source>
</reference>
<dbReference type="EMBL" id="CP001074">
    <property type="protein sequence ID" value="ACE89893.1"/>
    <property type="molecule type" value="Genomic_DNA"/>
</dbReference>
<dbReference type="SMR" id="B3PRB0"/>
<dbReference type="KEGG" id="rec:RHECIAT_CH0000908"/>
<dbReference type="eggNOG" id="COG3705">
    <property type="taxonomic scope" value="Bacteria"/>
</dbReference>
<dbReference type="HOGENOM" id="CLU_025113_6_0_5"/>
<dbReference type="UniPathway" id="UPA00031">
    <property type="reaction ID" value="UER00006"/>
</dbReference>
<dbReference type="Proteomes" id="UP000008817">
    <property type="component" value="Chromosome"/>
</dbReference>
<dbReference type="GO" id="GO:0005737">
    <property type="term" value="C:cytoplasm"/>
    <property type="evidence" value="ECO:0007669"/>
    <property type="project" value="UniProtKB-SubCell"/>
</dbReference>
<dbReference type="GO" id="GO:0004821">
    <property type="term" value="F:histidine-tRNA ligase activity"/>
    <property type="evidence" value="ECO:0007669"/>
    <property type="project" value="TreeGrafter"/>
</dbReference>
<dbReference type="GO" id="GO:0006427">
    <property type="term" value="P:histidyl-tRNA aminoacylation"/>
    <property type="evidence" value="ECO:0007669"/>
    <property type="project" value="TreeGrafter"/>
</dbReference>
<dbReference type="GO" id="GO:0000105">
    <property type="term" value="P:L-histidine biosynthetic process"/>
    <property type="evidence" value="ECO:0007669"/>
    <property type="project" value="UniProtKB-UniRule"/>
</dbReference>
<dbReference type="Gene3D" id="3.30.930.10">
    <property type="entry name" value="Bira Bifunctional Protein, Domain 2"/>
    <property type="match status" value="1"/>
</dbReference>
<dbReference type="HAMAP" id="MF_00125">
    <property type="entry name" value="HisZ"/>
    <property type="match status" value="1"/>
</dbReference>
<dbReference type="InterPro" id="IPR045864">
    <property type="entry name" value="aa-tRNA-synth_II/BPL/LPL"/>
</dbReference>
<dbReference type="InterPro" id="IPR041715">
    <property type="entry name" value="HisRS-like_core"/>
</dbReference>
<dbReference type="InterPro" id="IPR004516">
    <property type="entry name" value="HisRS/HisZ"/>
</dbReference>
<dbReference type="InterPro" id="IPR004517">
    <property type="entry name" value="HisZ"/>
</dbReference>
<dbReference type="NCBIfam" id="NF008951">
    <property type="entry name" value="PRK12295.1-4"/>
    <property type="match status" value="1"/>
</dbReference>
<dbReference type="PANTHER" id="PTHR43707:SF1">
    <property type="entry name" value="HISTIDINE--TRNA LIGASE, MITOCHONDRIAL-RELATED"/>
    <property type="match status" value="1"/>
</dbReference>
<dbReference type="PANTHER" id="PTHR43707">
    <property type="entry name" value="HISTIDYL-TRNA SYNTHETASE"/>
    <property type="match status" value="1"/>
</dbReference>
<dbReference type="Pfam" id="PF13393">
    <property type="entry name" value="tRNA-synt_His"/>
    <property type="match status" value="2"/>
</dbReference>
<dbReference type="PIRSF" id="PIRSF001549">
    <property type="entry name" value="His-tRNA_synth"/>
    <property type="match status" value="1"/>
</dbReference>
<dbReference type="SUPFAM" id="SSF55681">
    <property type="entry name" value="Class II aaRS and biotin synthetases"/>
    <property type="match status" value="1"/>
</dbReference>
<comment type="function">
    <text evidence="1">Required for the first step of histidine biosynthesis. May allow the feedback regulation of ATP phosphoribosyltransferase activity by histidine.</text>
</comment>
<comment type="pathway">
    <text evidence="1">Amino-acid biosynthesis; L-histidine biosynthesis; L-histidine from 5-phospho-alpha-D-ribose 1-diphosphate: step 1/9.</text>
</comment>
<comment type="subunit">
    <text evidence="1">Heteromultimer composed of HisG and HisZ subunits.</text>
</comment>
<comment type="subcellular location">
    <subcellularLocation>
        <location evidence="1">Cytoplasm</location>
    </subcellularLocation>
</comment>
<comment type="miscellaneous">
    <text>This function is generally fulfilled by the C-terminal part of HisG, which is missing in some bacteria such as this one.</text>
</comment>
<comment type="similarity">
    <text evidence="1">Belongs to the class-II aminoacyl-tRNA synthetase family. HisZ subfamily.</text>
</comment>
<gene>
    <name evidence="1" type="primary">hisZ</name>
    <name type="ordered locus">RHECIAT_CH0000908</name>
</gene>
<proteinExistence type="inferred from homology"/>
<organism>
    <name type="scientific">Rhizobium etli (strain CIAT 652)</name>
    <dbReference type="NCBI Taxonomy" id="491916"/>
    <lineage>
        <taxon>Bacteria</taxon>
        <taxon>Pseudomonadati</taxon>
        <taxon>Pseudomonadota</taxon>
        <taxon>Alphaproteobacteria</taxon>
        <taxon>Hyphomicrobiales</taxon>
        <taxon>Rhizobiaceae</taxon>
        <taxon>Rhizobium/Agrobacterium group</taxon>
        <taxon>Rhizobium</taxon>
    </lineage>
</organism>
<name>HISZ_RHIE6</name>
<protein>
    <recommendedName>
        <fullName evidence="1">ATP phosphoribosyltransferase regulatory subunit</fullName>
    </recommendedName>
</protein>
<accession>B3PRB0</accession>
<evidence type="ECO:0000255" key="1">
    <source>
        <dbReference type="HAMAP-Rule" id="MF_00125"/>
    </source>
</evidence>
<keyword id="KW-0028">Amino-acid biosynthesis</keyword>
<keyword id="KW-0963">Cytoplasm</keyword>
<keyword id="KW-0368">Histidine biosynthesis</keyword>
<feature type="chain" id="PRO_1000095469" description="ATP phosphoribosyltransferase regulatory subunit">
    <location>
        <begin position="1"/>
        <end position="373"/>
    </location>
</feature>
<sequence length="373" mass="40374">MPLINLPEFSAELLSEFDARKAERIDTPVIQPAEPFLDIAGEDLRRRIFMTESETGASLCLRPEFTIPVCLRHIETATGTPKRYAYLGEVFRQRRDGANEFYQAGIEDLGDINIPSADARAIGDATGILARLLPGRRLSVTLGDQAVFEAVVQALGLPLGWQKRLIHAFGNMTQLEALLAGLVSPQFVTGLDDDIARLIAAGDEQALIAHIEQEMQATGYSTNASRSPPEIARRLKEKLVLSETRLDDAAFHVLEEFLSLHVPLVNASAALAGFADAAGLKLGNALSRFNGRVGALADAGVDLSCLDYRAAFGRPLDYYTGLVFEVTAEGSSAVLAGGGRFDRLLTFLGATDRIPAVGFSFWLDRIETERAAA</sequence>